<feature type="chain" id="PRO_0000142834" description="Protein W">
    <location>
        <begin position="1"/>
        <end position="318"/>
    </location>
</feature>
<feature type="region of interest" description="Disordered" evidence="2">
    <location>
        <begin position="1"/>
        <end position="23"/>
    </location>
</feature>
<feature type="region of interest" description="Disordered" evidence="2">
    <location>
        <begin position="38"/>
        <end position="318"/>
    </location>
</feature>
<feature type="compositionally biased region" description="Basic and acidic residues" evidence="2">
    <location>
        <begin position="7"/>
        <end position="20"/>
    </location>
</feature>
<feature type="compositionally biased region" description="Polar residues" evidence="2">
    <location>
        <begin position="50"/>
        <end position="59"/>
    </location>
</feature>
<feature type="compositionally biased region" description="Basic and acidic residues" evidence="2">
    <location>
        <begin position="83"/>
        <end position="101"/>
    </location>
</feature>
<feature type="compositionally biased region" description="Basic and acidic residues" evidence="2">
    <location>
        <begin position="150"/>
        <end position="168"/>
    </location>
</feature>
<feature type="compositionally biased region" description="Polar residues" evidence="2">
    <location>
        <begin position="191"/>
        <end position="206"/>
    </location>
</feature>
<feature type="modified residue" description="Phosphoserine; by host" evidence="1">
    <location>
        <position position="68"/>
    </location>
</feature>
<feature type="modified residue" description="Phosphoserine; by host" evidence="1">
    <location>
        <position position="125"/>
    </location>
</feature>
<feature type="modified residue" description="Phosphoserine; by host" evidence="1">
    <location>
        <position position="192"/>
    </location>
</feature>
<feature type="modified residue" description="Phosphoserine; by host" evidence="1">
    <location>
        <position position="249"/>
    </location>
</feature>
<feature type="modified residue" description="Phosphoserine; by host" evidence="1">
    <location>
        <position position="257"/>
    </location>
</feature>
<feature type="modified residue" description="Phosphoserine; by host" evidence="1">
    <location>
        <position position="260"/>
    </location>
</feature>
<sequence>MDQDAFILKEDSEVEREAPGGRESLSDVIGFLDAVLSSEPTDIGGDRSWLHNTINTPQGPGSAHRAKSEGEGEVSTPSTQDNRSGEESRVSGRTSKPEAEAHAGNLDKQNIHRAFGGRTGTNSVSQDLGDGGDSGILENPPNERGYPRSGIEDENREMAAHPDKRGEDQAEGLPEEVRGGTSLPDEGEGGASNNGRSMEPGSSHSARVTGVLVIPSPELEEAVLRRNKRRPTNSGSKPLTPATVPGTRSPPLNRYNSTGSPPGKPPSTQDEHINSGDTPAVRVKDRKPPIGTRSVSDCPANGRPIHPGLETDSTKKGA</sequence>
<organism>
    <name type="scientific">Sendai virus (strain Fushimi)</name>
    <name type="common">SeV</name>
    <dbReference type="NCBI Taxonomy" id="11195"/>
    <lineage>
        <taxon>Viruses</taxon>
        <taxon>Riboviria</taxon>
        <taxon>Orthornavirae</taxon>
        <taxon>Negarnaviricota</taxon>
        <taxon>Haploviricotina</taxon>
        <taxon>Monjiviricetes</taxon>
        <taxon>Mononegavirales</taxon>
        <taxon>Paramyxoviridae</taxon>
        <taxon>Feraresvirinae</taxon>
        <taxon>Respirovirus</taxon>
        <taxon>Respirovirus muris</taxon>
    </lineage>
</organism>
<gene>
    <name type="primary">P/V/C</name>
</gene>
<comment type="RNA editing">
    <location>
        <position position="318"/>
    </location>
    <text>Partially edited. RNA editing at this position consists of an insertion of one or two guanine nucleotides. The sequence displayed here is the W protein, derived from the +2G edited RNA. The unedited RNA gives rise to the P protein (AC P14252), the +1G edited RNA gives rise to the V protein (AC P69284).</text>
</comment>
<comment type="miscellaneous">
    <text>The P/V/C gene has two overlapping open reading frames. One encodes the P/V/W proteins and the other the C/Y proteins.</text>
</comment>
<proteinExistence type="inferred from homology"/>
<accession>P69285</accession>
<protein>
    <recommendedName>
        <fullName>Protein W</fullName>
    </recommendedName>
</protein>
<reference key="1">
    <citation type="journal article" date="1989" name="Nucleic Acids Res.">
        <title>Cloning and sequencing of the polymerase gene (P) of Sendai virus (strain Fushimi).</title>
        <authorList>
            <person name="Neubert W.J."/>
        </authorList>
    </citation>
    <scope>NUCLEOTIDE SEQUENCE [GENOMIC RNA]</scope>
</reference>
<name>W_SENDF</name>
<evidence type="ECO:0000250" key="1"/>
<evidence type="ECO:0000256" key="2">
    <source>
        <dbReference type="SAM" id="MobiDB-lite"/>
    </source>
</evidence>
<dbReference type="EMBL" id="X17008">
    <property type="status" value="NOT_ANNOTATED_CDS"/>
    <property type="molecule type" value="Genomic_RNA"/>
</dbReference>
<dbReference type="Proteomes" id="UP000006825">
    <property type="component" value="Genome"/>
</dbReference>
<organismHost>
    <name type="scientific">Cavia cutleri</name>
    <name type="common">Guinea pig</name>
    <dbReference type="NCBI Taxonomy" id="10144"/>
</organismHost>
<organismHost>
    <name type="scientific">Cricetidae sp.</name>
    <name type="common">Hamster</name>
    <dbReference type="NCBI Taxonomy" id="36483"/>
</organismHost>
<organismHost>
    <name type="scientific">Mus musculus</name>
    <name type="common">Mouse</name>
    <dbReference type="NCBI Taxonomy" id="10090"/>
</organismHost>
<organismHost>
    <name type="scientific">Rattus norvegicus</name>
    <name type="common">Rat</name>
    <dbReference type="NCBI Taxonomy" id="10116"/>
</organismHost>
<keyword id="KW-0597">Phosphoprotein</keyword>
<keyword id="KW-0691">RNA editing</keyword>